<accession>Q9UK12</accession>
<accession>G5E9B9</accession>
<accession>Q8N6G7</accession>
<accession>Q9P1U5</accession>
<organism>
    <name type="scientific">Homo sapiens</name>
    <name type="common">Human</name>
    <dbReference type="NCBI Taxonomy" id="9606"/>
    <lineage>
        <taxon>Eukaryota</taxon>
        <taxon>Metazoa</taxon>
        <taxon>Chordata</taxon>
        <taxon>Craniata</taxon>
        <taxon>Vertebrata</taxon>
        <taxon>Euteleostomi</taxon>
        <taxon>Mammalia</taxon>
        <taxon>Eutheria</taxon>
        <taxon>Euarchontoglires</taxon>
        <taxon>Primates</taxon>
        <taxon>Haplorrhini</taxon>
        <taxon>Catarrhini</taxon>
        <taxon>Hominidae</taxon>
        <taxon>Homo</taxon>
    </lineage>
</organism>
<keyword id="KW-0025">Alternative splicing</keyword>
<keyword id="KW-0238">DNA-binding</keyword>
<keyword id="KW-0479">Metal-binding</keyword>
<keyword id="KW-0539">Nucleus</keyword>
<keyword id="KW-1267">Proteomics identification</keyword>
<keyword id="KW-1185">Reference proteome</keyword>
<keyword id="KW-0677">Repeat</keyword>
<keyword id="KW-0804">Transcription</keyword>
<keyword id="KW-0805">Transcription regulation</keyword>
<keyword id="KW-0862">Zinc</keyword>
<keyword id="KW-0863">Zinc-finger</keyword>
<protein>
    <recommendedName>
        <fullName>Zinc finger protein 222</fullName>
    </recommendedName>
</protein>
<feature type="chain" id="PRO_0000047463" description="Zinc finger protein 222">
    <location>
        <begin position="1"/>
        <end position="451"/>
    </location>
</feature>
<feature type="domain" description="KRAB" evidence="2">
    <location>
        <begin position="8"/>
        <end position="85"/>
    </location>
</feature>
<feature type="zinc finger region" description="C2H2-type 1" evidence="1">
    <location>
        <begin position="145"/>
        <end position="167"/>
    </location>
</feature>
<feature type="zinc finger region" description="C2H2-type 2" evidence="1">
    <location>
        <begin position="173"/>
        <end position="195"/>
    </location>
</feature>
<feature type="zinc finger region" description="C2H2-type 3" evidence="1">
    <location>
        <begin position="201"/>
        <end position="223"/>
    </location>
</feature>
<feature type="zinc finger region" description="C2H2-type 4" evidence="1">
    <location>
        <begin position="229"/>
        <end position="251"/>
    </location>
</feature>
<feature type="zinc finger region" description="C2H2-type 5" evidence="1">
    <location>
        <begin position="257"/>
        <end position="279"/>
    </location>
</feature>
<feature type="zinc finger region" description="C2H2-type 6; degenerate" evidence="1">
    <location>
        <begin position="285"/>
        <end position="307"/>
    </location>
</feature>
<feature type="zinc finger region" description="C2H2-type 7" evidence="1">
    <location>
        <begin position="313"/>
        <end position="335"/>
    </location>
</feature>
<feature type="zinc finger region" description="C2H2-type 8" evidence="1">
    <location>
        <begin position="341"/>
        <end position="363"/>
    </location>
</feature>
<feature type="zinc finger region" description="C2H2-type 9" evidence="1">
    <location>
        <begin position="369"/>
        <end position="391"/>
    </location>
</feature>
<feature type="zinc finger region" description="C2H2-type 10; degenerate" evidence="1">
    <location>
        <begin position="397"/>
        <end position="419"/>
    </location>
</feature>
<feature type="splice variant" id="VSP_046951" description="In isoform 2." evidence="4">
    <original>MAKLY</original>
    <variation>MIDSGEKKPGRRAE</variation>
    <location>
        <begin position="1"/>
        <end position="5"/>
    </location>
</feature>
<feature type="splice variant" id="VSP_046952" description="In isoform 2." evidence="4">
    <original>V</original>
    <variation>VGHQPFHGDTFHFLREEKFWVMGTTSQREGNL</variation>
    <location>
        <position position="47"/>
    </location>
</feature>
<feature type="sequence variant" id="VAR_052796" description="In dbSNP:rs11880330.">
    <original>K</original>
    <variation>E</variation>
    <location>
        <position position="50"/>
    </location>
</feature>
<feature type="sequence variant" id="VAR_052797" description="In dbSNP:rs7258517." evidence="3">
    <original>V</original>
    <variation>F</variation>
    <location>
        <position position="58"/>
    </location>
</feature>
<feature type="sequence variant" id="VAR_061940" description="In dbSNP:rs59926292.">
    <original>R</original>
    <variation>G</variation>
    <location>
        <position position="82"/>
    </location>
</feature>
<feature type="sequence variant" id="VAR_052798" description="In dbSNP:rs8112679.">
    <original>G</original>
    <variation>D</variation>
    <location>
        <position position="263"/>
    </location>
</feature>
<reference key="1">
    <citation type="journal article" date="2003" name="Genome Res.">
        <title>Differential expansion of zinc-finger transcription factor loci in homologous human and mouse gene clusters.</title>
        <authorList>
            <person name="Shannon M."/>
            <person name="Hamilton A.T."/>
            <person name="Gordon L."/>
            <person name="Branscomb E."/>
            <person name="Stubbs L."/>
        </authorList>
    </citation>
    <scope>NUCLEOTIDE SEQUENCE [MRNA] (ISOFORM 1)</scope>
    <scope>VARIANT PHE-58</scope>
</reference>
<reference key="2">
    <citation type="journal article" date="2004" name="Nature">
        <title>The DNA sequence and biology of human chromosome 19.</title>
        <authorList>
            <person name="Grimwood J."/>
            <person name="Gordon L.A."/>
            <person name="Olsen A.S."/>
            <person name="Terry A."/>
            <person name="Schmutz J."/>
            <person name="Lamerdin J.E."/>
            <person name="Hellsten U."/>
            <person name="Goodstein D."/>
            <person name="Couronne O."/>
            <person name="Tran-Gyamfi M."/>
            <person name="Aerts A."/>
            <person name="Altherr M."/>
            <person name="Ashworth L."/>
            <person name="Bajorek E."/>
            <person name="Black S."/>
            <person name="Branscomb E."/>
            <person name="Caenepeel S."/>
            <person name="Carrano A.V."/>
            <person name="Caoile C."/>
            <person name="Chan Y.M."/>
            <person name="Christensen M."/>
            <person name="Cleland C.A."/>
            <person name="Copeland A."/>
            <person name="Dalin E."/>
            <person name="Dehal P."/>
            <person name="Denys M."/>
            <person name="Detter J.C."/>
            <person name="Escobar J."/>
            <person name="Flowers D."/>
            <person name="Fotopulos D."/>
            <person name="Garcia C."/>
            <person name="Georgescu A.M."/>
            <person name="Glavina T."/>
            <person name="Gomez M."/>
            <person name="Gonzales E."/>
            <person name="Groza M."/>
            <person name="Hammon N."/>
            <person name="Hawkins T."/>
            <person name="Haydu L."/>
            <person name="Ho I."/>
            <person name="Huang W."/>
            <person name="Israni S."/>
            <person name="Jett J."/>
            <person name="Kadner K."/>
            <person name="Kimball H."/>
            <person name="Kobayashi A."/>
            <person name="Larionov V."/>
            <person name="Leem S.-H."/>
            <person name="Lopez F."/>
            <person name="Lou Y."/>
            <person name="Lowry S."/>
            <person name="Malfatti S."/>
            <person name="Martinez D."/>
            <person name="McCready P.M."/>
            <person name="Medina C."/>
            <person name="Morgan J."/>
            <person name="Nelson K."/>
            <person name="Nolan M."/>
            <person name="Ovcharenko I."/>
            <person name="Pitluck S."/>
            <person name="Pollard M."/>
            <person name="Popkie A.P."/>
            <person name="Predki P."/>
            <person name="Quan G."/>
            <person name="Ramirez L."/>
            <person name="Rash S."/>
            <person name="Retterer J."/>
            <person name="Rodriguez A."/>
            <person name="Rogers S."/>
            <person name="Salamov A."/>
            <person name="Salazar A."/>
            <person name="She X."/>
            <person name="Smith D."/>
            <person name="Slezak T."/>
            <person name="Solovyev V."/>
            <person name="Thayer N."/>
            <person name="Tice H."/>
            <person name="Tsai M."/>
            <person name="Ustaszewska A."/>
            <person name="Vo N."/>
            <person name="Wagner M."/>
            <person name="Wheeler J."/>
            <person name="Wu K."/>
            <person name="Xie G."/>
            <person name="Yang J."/>
            <person name="Dubchak I."/>
            <person name="Furey T.S."/>
            <person name="DeJong P."/>
            <person name="Dickson M."/>
            <person name="Gordon D."/>
            <person name="Eichler E.E."/>
            <person name="Pennacchio L.A."/>
            <person name="Richardson P."/>
            <person name="Stubbs L."/>
            <person name="Rokhsar D.S."/>
            <person name="Myers R.M."/>
            <person name="Rubin E.M."/>
            <person name="Lucas S.M."/>
        </authorList>
    </citation>
    <scope>NUCLEOTIDE SEQUENCE [LARGE SCALE GENOMIC DNA]</scope>
</reference>
<reference key="3">
    <citation type="submission" date="2005-07" db="EMBL/GenBank/DDBJ databases">
        <authorList>
            <person name="Mural R.J."/>
            <person name="Istrail S."/>
            <person name="Sutton G.G."/>
            <person name="Florea L."/>
            <person name="Halpern A.L."/>
            <person name="Mobarry C.M."/>
            <person name="Lippert R."/>
            <person name="Walenz B."/>
            <person name="Shatkay H."/>
            <person name="Dew I."/>
            <person name="Miller J.R."/>
            <person name="Flanigan M.J."/>
            <person name="Edwards N.J."/>
            <person name="Bolanos R."/>
            <person name="Fasulo D."/>
            <person name="Halldorsson B.V."/>
            <person name="Hannenhalli S."/>
            <person name="Turner R."/>
            <person name="Yooseph S."/>
            <person name="Lu F."/>
            <person name="Nusskern D.R."/>
            <person name="Shue B.C."/>
            <person name="Zheng X.H."/>
            <person name="Zhong F."/>
            <person name="Delcher A.L."/>
            <person name="Huson D.H."/>
            <person name="Kravitz S.A."/>
            <person name="Mouchard L."/>
            <person name="Reinert K."/>
            <person name="Remington K.A."/>
            <person name="Clark A.G."/>
            <person name="Waterman M.S."/>
            <person name="Eichler E.E."/>
            <person name="Adams M.D."/>
            <person name="Hunkapiller M.W."/>
            <person name="Myers E.W."/>
            <person name="Venter J.C."/>
        </authorList>
    </citation>
    <scope>NUCLEOTIDE SEQUENCE [LARGE SCALE GENOMIC DNA]</scope>
</reference>
<reference key="4">
    <citation type="journal article" date="2004" name="Genome Res.">
        <title>The status, quality, and expansion of the NIH full-length cDNA project: the Mammalian Gene Collection (MGC).</title>
        <authorList>
            <consortium name="The MGC Project Team"/>
        </authorList>
    </citation>
    <scope>NUCLEOTIDE SEQUENCE [LARGE SCALE MRNA] (ISOFORM 2)</scope>
    <source>
        <tissue>Lung</tissue>
    </source>
</reference>
<evidence type="ECO:0000255" key="1">
    <source>
        <dbReference type="PROSITE-ProRule" id="PRU00042"/>
    </source>
</evidence>
<evidence type="ECO:0000255" key="2">
    <source>
        <dbReference type="PROSITE-ProRule" id="PRU00119"/>
    </source>
</evidence>
<evidence type="ECO:0000269" key="3">
    <source>
    </source>
</evidence>
<evidence type="ECO:0000303" key="4">
    <source>
    </source>
</evidence>
<evidence type="ECO:0000305" key="5"/>
<proteinExistence type="evidence at protein level"/>
<gene>
    <name type="primary">ZNF222</name>
</gene>
<name>ZN222_HUMAN</name>
<sequence>MAKLYEAVTFKDVAVIFTEEELGLLDPAQRKLYRDVMLENFRNLLSVGGKIQTEMETVPEAGTHEEFSCKQIWEQIASDLTRSQDTTISNSQLFEQDDNPSQIKARLSTVHTREKPFQGENCKQFFSDVSFFDLPQQLYSGEKSHTCDECGKSFCYISALHIHQRVHMGVKCYKCDVCGKEFSQSSRLQTHQRVHTGEKPFKCEQCGKGFRCRSALKVHCKLHMREKPYNCEKCGKAFMHNFQLQKHHRIHTGEKPFKCEICGKSFCLRSSLNRHCMVHTAEKLYKSEKYGRGFIDRLDLHKHQMIHMGQKPYNCKECGKSFKWSSYLLVHQRVHTGEKPYKCEECGKGYISKSGLDFHHRTHTGERSYNCDNCGKSFRHASSILNHKKLHCQRKPLKCEDCGKRLVCRSYCKDQQRDHSGENPSKCEDCGKRYKRRLNLDIILSLFLNDI</sequence>
<comment type="function">
    <text>May be involved in transcriptional regulation.</text>
</comment>
<comment type="subcellular location">
    <subcellularLocation>
        <location evidence="5">Nucleus</location>
    </subcellularLocation>
</comment>
<comment type="alternative products">
    <event type="alternative splicing"/>
    <isoform>
        <id>Q9UK12-1</id>
        <name>1</name>
        <sequence type="displayed"/>
    </isoform>
    <isoform>
        <id>Q9UK12-2</id>
        <name>2</name>
        <sequence type="described" ref="VSP_046951 VSP_046952"/>
    </isoform>
</comment>
<comment type="similarity">
    <text evidence="5">Belongs to the krueppel C2H2-type zinc-finger protein family.</text>
</comment>
<comment type="sequence caution" evidence="5">
    <conflict type="erroneous initiation">
        <sequence resource="EMBL-CDS" id="AAH30261"/>
    </conflict>
    <text>Truncated N-terminus.</text>
</comment>
<dbReference type="EMBL" id="AF187988">
    <property type="protein sequence ID" value="AAF04104.1"/>
    <property type="molecule type" value="mRNA"/>
</dbReference>
<dbReference type="EMBL" id="AC067968">
    <property type="protein sequence ID" value="AAF66075.1"/>
    <property type="molecule type" value="Genomic_DNA"/>
</dbReference>
<dbReference type="EMBL" id="CH471126">
    <property type="protein sequence ID" value="EAW57242.1"/>
    <property type="molecule type" value="Genomic_DNA"/>
</dbReference>
<dbReference type="EMBL" id="BC030261">
    <property type="protein sequence ID" value="AAH30261.1"/>
    <property type="status" value="ALT_INIT"/>
    <property type="molecule type" value="mRNA"/>
</dbReference>
<dbReference type="CCDS" id="CCDS33045.1">
    <molecule id="Q9UK12-1"/>
</dbReference>
<dbReference type="CCDS" id="CCDS46098.1">
    <molecule id="Q9UK12-2"/>
</dbReference>
<dbReference type="PIR" id="B42177">
    <property type="entry name" value="B42177"/>
</dbReference>
<dbReference type="RefSeq" id="NP_001123468.1">
    <molecule id="Q9UK12-2"/>
    <property type="nucleotide sequence ID" value="NM_001129996.2"/>
</dbReference>
<dbReference type="RefSeq" id="NP_037492.2">
    <molecule id="Q9UK12-1"/>
    <property type="nucleotide sequence ID" value="NM_013360.3"/>
</dbReference>
<dbReference type="SMR" id="Q9UK12"/>
<dbReference type="BioGRID" id="113473">
    <property type="interactions" value="1"/>
</dbReference>
<dbReference type="FunCoup" id="Q9UK12">
    <property type="interactions" value="5"/>
</dbReference>
<dbReference type="IntAct" id="Q9UK12">
    <property type="interactions" value="7"/>
</dbReference>
<dbReference type="STRING" id="9606.ENSP00000375822"/>
<dbReference type="iPTMnet" id="Q9UK12"/>
<dbReference type="PhosphoSitePlus" id="Q9UK12"/>
<dbReference type="BioMuta" id="ZNF222"/>
<dbReference type="DMDM" id="116242857"/>
<dbReference type="jPOST" id="Q9UK12"/>
<dbReference type="MassIVE" id="Q9UK12"/>
<dbReference type="PeptideAtlas" id="Q9UK12"/>
<dbReference type="ProteomicsDB" id="33894"/>
<dbReference type="ProteomicsDB" id="72176"/>
<dbReference type="ProteomicsDB" id="84703">
    <molecule id="Q9UK12-1"/>
</dbReference>
<dbReference type="Antibodypedia" id="843">
    <property type="antibodies" value="60 antibodies from 13 providers"/>
</dbReference>
<dbReference type="DNASU" id="7673"/>
<dbReference type="Ensembl" id="ENST00000187879.12">
    <molecule id="Q9UK12-1"/>
    <property type="protein sequence ID" value="ENSP00000187879.6"/>
    <property type="gene ID" value="ENSG00000159885.14"/>
</dbReference>
<dbReference type="Ensembl" id="ENST00000391960.4">
    <molecule id="Q9UK12-2"/>
    <property type="protein sequence ID" value="ENSP00000375822.2"/>
    <property type="gene ID" value="ENSG00000159885.14"/>
</dbReference>
<dbReference type="GeneID" id="7673"/>
<dbReference type="KEGG" id="hsa:7673"/>
<dbReference type="MANE-Select" id="ENST00000391960.4">
    <molecule id="Q9UK12-2"/>
    <property type="protein sequence ID" value="ENSP00000375822.2"/>
    <property type="RefSeq nucleotide sequence ID" value="NM_001129996.2"/>
    <property type="RefSeq protein sequence ID" value="NP_001123468.1"/>
</dbReference>
<dbReference type="UCSC" id="uc002oyc.4">
    <molecule id="Q9UK12-1"/>
    <property type="organism name" value="human"/>
</dbReference>
<dbReference type="AGR" id="HGNC:13015"/>
<dbReference type="CTD" id="7673"/>
<dbReference type="DisGeNET" id="7673"/>
<dbReference type="GeneCards" id="ZNF222"/>
<dbReference type="HGNC" id="HGNC:13015">
    <property type="gene designation" value="ZNF222"/>
</dbReference>
<dbReference type="HPA" id="ENSG00000159885">
    <property type="expression patterns" value="Low tissue specificity"/>
</dbReference>
<dbReference type="MIM" id="617357">
    <property type="type" value="gene"/>
</dbReference>
<dbReference type="neXtProt" id="NX_Q9UK12"/>
<dbReference type="OpenTargets" id="ENSG00000159885"/>
<dbReference type="PharmGKB" id="PA37594"/>
<dbReference type="VEuPathDB" id="HostDB:ENSG00000159885"/>
<dbReference type="eggNOG" id="KOG1721">
    <property type="taxonomic scope" value="Eukaryota"/>
</dbReference>
<dbReference type="GeneTree" id="ENSGT00940000164111"/>
<dbReference type="HOGENOM" id="CLU_002678_44_3_1"/>
<dbReference type="InParanoid" id="Q9UK12"/>
<dbReference type="OMA" id="STHAMVH"/>
<dbReference type="OrthoDB" id="9411774at2759"/>
<dbReference type="PAN-GO" id="Q9UK12">
    <property type="GO annotations" value="4 GO annotations based on evolutionary models"/>
</dbReference>
<dbReference type="PhylomeDB" id="Q9UK12"/>
<dbReference type="TreeFam" id="TF341885"/>
<dbReference type="PathwayCommons" id="Q9UK12"/>
<dbReference type="Reactome" id="R-HSA-212436">
    <property type="pathway name" value="Generic Transcription Pathway"/>
</dbReference>
<dbReference type="BioGRID-ORCS" id="7673">
    <property type="hits" value="15 hits in 1168 CRISPR screens"/>
</dbReference>
<dbReference type="ChiTaRS" id="ZNF222">
    <property type="organism name" value="human"/>
</dbReference>
<dbReference type="GenomeRNAi" id="7673"/>
<dbReference type="Pharos" id="Q9UK12">
    <property type="development level" value="Tdark"/>
</dbReference>
<dbReference type="PRO" id="PR:Q9UK12"/>
<dbReference type="Proteomes" id="UP000005640">
    <property type="component" value="Chromosome 19"/>
</dbReference>
<dbReference type="RNAct" id="Q9UK12">
    <property type="molecule type" value="protein"/>
</dbReference>
<dbReference type="Bgee" id="ENSG00000159885">
    <property type="expression patterns" value="Expressed in secondary oocyte and 121 other cell types or tissues"/>
</dbReference>
<dbReference type="ExpressionAtlas" id="Q9UK12">
    <property type="expression patterns" value="baseline and differential"/>
</dbReference>
<dbReference type="GO" id="GO:0005634">
    <property type="term" value="C:nucleus"/>
    <property type="evidence" value="ECO:0007669"/>
    <property type="project" value="UniProtKB-SubCell"/>
</dbReference>
<dbReference type="GO" id="GO:0003677">
    <property type="term" value="F:DNA binding"/>
    <property type="evidence" value="ECO:0007669"/>
    <property type="project" value="UniProtKB-KW"/>
</dbReference>
<dbReference type="GO" id="GO:0003700">
    <property type="term" value="F:DNA-binding transcription factor activity"/>
    <property type="evidence" value="ECO:0000303"/>
    <property type="project" value="ARUK-UCL"/>
</dbReference>
<dbReference type="GO" id="GO:0008270">
    <property type="term" value="F:zinc ion binding"/>
    <property type="evidence" value="ECO:0007669"/>
    <property type="project" value="UniProtKB-KW"/>
</dbReference>
<dbReference type="CDD" id="cd07765">
    <property type="entry name" value="KRAB_A-box"/>
    <property type="match status" value="1"/>
</dbReference>
<dbReference type="FunFam" id="3.30.160.60:FF:001313">
    <property type="entry name" value="Zinc finger protein 155"/>
    <property type="match status" value="1"/>
</dbReference>
<dbReference type="FunFam" id="3.30.160.60:FF:001189">
    <property type="entry name" value="Zinc finger protein 222"/>
    <property type="match status" value="1"/>
</dbReference>
<dbReference type="FunFam" id="3.30.160.60:FF:001597">
    <property type="entry name" value="Zinc finger protein 222"/>
    <property type="match status" value="1"/>
</dbReference>
<dbReference type="FunFam" id="3.30.160.60:FF:001750">
    <property type="entry name" value="Zinc finger protein 222"/>
    <property type="match status" value="1"/>
</dbReference>
<dbReference type="FunFam" id="3.30.160.60:FF:001979">
    <property type="entry name" value="Zinc finger protein 222"/>
    <property type="match status" value="1"/>
</dbReference>
<dbReference type="FunFam" id="3.30.160.60:FF:002239">
    <property type="entry name" value="Zinc finger protein 226"/>
    <property type="match status" value="1"/>
</dbReference>
<dbReference type="FunFam" id="3.30.160.60:FF:000017">
    <property type="entry name" value="zinc finger protein 62 homolog"/>
    <property type="match status" value="1"/>
</dbReference>
<dbReference type="FunFam" id="3.30.160.60:FF:000213">
    <property type="entry name" value="Zinc finger protein 624"/>
    <property type="match status" value="1"/>
</dbReference>
<dbReference type="FunFam" id="3.30.160.60:FF:000176">
    <property type="entry name" value="zinc finger protein 70"/>
    <property type="match status" value="1"/>
</dbReference>
<dbReference type="Gene3D" id="6.10.140.140">
    <property type="match status" value="1"/>
</dbReference>
<dbReference type="Gene3D" id="3.30.160.60">
    <property type="entry name" value="Classic Zinc Finger"/>
    <property type="match status" value="10"/>
</dbReference>
<dbReference type="InterPro" id="IPR001909">
    <property type="entry name" value="KRAB"/>
</dbReference>
<dbReference type="InterPro" id="IPR036051">
    <property type="entry name" value="KRAB_dom_sf"/>
</dbReference>
<dbReference type="InterPro" id="IPR036236">
    <property type="entry name" value="Znf_C2H2_sf"/>
</dbReference>
<dbReference type="InterPro" id="IPR013087">
    <property type="entry name" value="Znf_C2H2_type"/>
</dbReference>
<dbReference type="PANTHER" id="PTHR24393:SF15">
    <property type="entry name" value="IP01243P-RELATED"/>
    <property type="match status" value="1"/>
</dbReference>
<dbReference type="PANTHER" id="PTHR24393">
    <property type="entry name" value="ZINC FINGER PROTEIN"/>
    <property type="match status" value="1"/>
</dbReference>
<dbReference type="Pfam" id="PF01352">
    <property type="entry name" value="KRAB"/>
    <property type="match status" value="1"/>
</dbReference>
<dbReference type="Pfam" id="PF00096">
    <property type="entry name" value="zf-C2H2"/>
    <property type="match status" value="7"/>
</dbReference>
<dbReference type="SMART" id="SM00349">
    <property type="entry name" value="KRAB"/>
    <property type="match status" value="1"/>
</dbReference>
<dbReference type="SMART" id="SM00355">
    <property type="entry name" value="ZnF_C2H2"/>
    <property type="match status" value="8"/>
</dbReference>
<dbReference type="SUPFAM" id="SSF57667">
    <property type="entry name" value="beta-beta-alpha zinc fingers"/>
    <property type="match status" value="6"/>
</dbReference>
<dbReference type="SUPFAM" id="SSF109640">
    <property type="entry name" value="KRAB domain (Kruppel-associated box)"/>
    <property type="match status" value="1"/>
</dbReference>
<dbReference type="PROSITE" id="PS50805">
    <property type="entry name" value="KRAB"/>
    <property type="match status" value="1"/>
</dbReference>
<dbReference type="PROSITE" id="PS00028">
    <property type="entry name" value="ZINC_FINGER_C2H2_1"/>
    <property type="match status" value="8"/>
</dbReference>
<dbReference type="PROSITE" id="PS50157">
    <property type="entry name" value="ZINC_FINGER_C2H2_2"/>
    <property type="match status" value="10"/>
</dbReference>